<feature type="chain" id="PRO_0000394506" description="Trafficking kinesin-binding protein 1">
    <location>
        <begin position="1"/>
        <end position="939"/>
    </location>
</feature>
<feature type="domain" description="HAP1 N-terminal">
    <location>
        <begin position="46"/>
        <end position="353"/>
    </location>
</feature>
<feature type="region of interest" description="Interaction with HGS" evidence="1">
    <location>
        <begin position="359"/>
        <end position="509"/>
    </location>
</feature>
<feature type="region of interest" description="Disordered" evidence="5">
    <location>
        <begin position="472"/>
        <end position="492"/>
    </location>
</feature>
<feature type="region of interest" description="Interaction with OGT" evidence="3">
    <location>
        <begin position="655"/>
        <end position="669"/>
    </location>
</feature>
<feature type="coiled-coil region" evidence="4">
    <location>
        <begin position="106"/>
        <end position="354"/>
    </location>
</feature>
<feature type="coiled-coil region" evidence="4">
    <location>
        <begin position="490"/>
        <end position="524"/>
    </location>
</feature>
<feature type="modified residue" description="Phosphoserine" evidence="11">
    <location>
        <position position="534"/>
    </location>
</feature>
<feature type="modified residue" description="Phosphoserine" evidence="11">
    <location>
        <position position="716"/>
    </location>
</feature>
<feature type="modified residue" description="Phosphoserine" evidence="11">
    <location>
        <position position="905"/>
    </location>
</feature>
<feature type="glycosylation site" description="O-linked (GlcNAc) serine" evidence="3">
    <location>
        <position position="444"/>
    </location>
</feature>
<feature type="glycosylation site" description="O-linked (GlcNAc) serine" evidence="3">
    <location>
        <position position="677"/>
    </location>
</feature>
<feature type="glycosylation site" description="O-linked (GlcNAc) serine" evidence="3">
    <location>
        <position position="716"/>
    </location>
</feature>
<feature type="splice variant" id="VSP_039277" description="In isoform 2." evidence="8">
    <original>MALAIQLRQPSRAQPLPGLSHTLAGTDSCDVCNST</original>
    <variation>MLPATESTGMPAPSPTCATAP</variation>
    <location>
        <begin position="1"/>
        <end position="35"/>
    </location>
</feature>
<feature type="splice variant" id="VSP_039278" description="In isoform 2." evidence="8">
    <original>SATLHHWQQLAQPHLGGILDPRPGVVTKGFRTLDVDLDEVYCLNDFEE</original>
    <variation>DHQGLSVLLCDSLWALIHHRKASHQCHTYSFFFRDSHPRCWFEFL</variation>
    <location>
        <begin position="580"/>
        <end position="627"/>
    </location>
</feature>
<feature type="splice variant" id="VSP_039279" description="In isoform 2." evidence="8">
    <location>
        <begin position="628"/>
        <end position="939"/>
    </location>
</feature>
<dbReference type="EMBL" id="AK041436">
    <property type="protein sequence ID" value="BAC30946.1"/>
    <property type="molecule type" value="mRNA"/>
</dbReference>
<dbReference type="EMBL" id="BC058971">
    <property type="protein sequence ID" value="AAH58971.1"/>
    <property type="molecule type" value="mRNA"/>
</dbReference>
<dbReference type="EMBL" id="CH466587">
    <property type="protein sequence ID" value="EDL09157.1"/>
    <property type="molecule type" value="Genomic_DNA"/>
</dbReference>
<dbReference type="CCDS" id="CCDS40810.1">
    <molecule id="Q6PD31-1"/>
</dbReference>
<dbReference type="RefSeq" id="NP_780323.2">
    <molecule id="Q6PD31-1"/>
    <property type="nucleotide sequence ID" value="NM_175114.4"/>
</dbReference>
<dbReference type="SMR" id="Q6PD31"/>
<dbReference type="FunCoup" id="Q6PD31">
    <property type="interactions" value="1156"/>
</dbReference>
<dbReference type="STRING" id="10090.ENSMUSP00000044482"/>
<dbReference type="GlyCosmos" id="Q6PD31">
    <property type="glycosylation" value="3 sites, No reported glycans"/>
</dbReference>
<dbReference type="GlyGen" id="Q6PD31">
    <property type="glycosylation" value="9 sites, 1 O-linked glycan (5 sites)"/>
</dbReference>
<dbReference type="iPTMnet" id="Q6PD31"/>
<dbReference type="PhosphoSitePlus" id="Q6PD31"/>
<dbReference type="jPOST" id="Q6PD31"/>
<dbReference type="PaxDb" id="10090-ENSMUSP00000044482"/>
<dbReference type="ProteomicsDB" id="298285">
    <molecule id="Q6PD31-1"/>
</dbReference>
<dbReference type="ProteomicsDB" id="298286">
    <molecule id="Q6PD31-2"/>
</dbReference>
<dbReference type="Antibodypedia" id="1603">
    <property type="antibodies" value="192 antibodies from 33 providers"/>
</dbReference>
<dbReference type="DNASU" id="67095"/>
<dbReference type="Ensembl" id="ENSMUST00000045903.8">
    <molecule id="Q6PD31-1"/>
    <property type="protein sequence ID" value="ENSMUSP00000044482.7"/>
    <property type="gene ID" value="ENSMUSG00000032536.13"/>
</dbReference>
<dbReference type="GeneID" id="67095"/>
<dbReference type="KEGG" id="mmu:67095"/>
<dbReference type="UCSC" id="uc009sdd.1">
    <molecule id="Q6PD31-1"/>
    <property type="organism name" value="mouse"/>
</dbReference>
<dbReference type="AGR" id="MGI:1914345"/>
<dbReference type="CTD" id="22906"/>
<dbReference type="MGI" id="MGI:1914345">
    <property type="gene designation" value="Trak1"/>
</dbReference>
<dbReference type="VEuPathDB" id="HostDB:ENSMUSG00000032536"/>
<dbReference type="eggNOG" id="KOG4360">
    <property type="taxonomic scope" value="Eukaryota"/>
</dbReference>
<dbReference type="GeneTree" id="ENSGT00940000155697"/>
<dbReference type="HOGENOM" id="CLU_013450_0_0_1"/>
<dbReference type="InParanoid" id="Q6PD31"/>
<dbReference type="OMA" id="PFDCRTP"/>
<dbReference type="OrthoDB" id="49313at9989"/>
<dbReference type="PhylomeDB" id="Q6PD31"/>
<dbReference type="TreeFam" id="TF323495"/>
<dbReference type="Reactome" id="R-MMU-9013419">
    <property type="pathway name" value="RHOT2 GTPase cycle"/>
</dbReference>
<dbReference type="Reactome" id="R-MMU-9013425">
    <property type="pathway name" value="RHOT1 GTPase cycle"/>
</dbReference>
<dbReference type="BioGRID-ORCS" id="67095">
    <property type="hits" value="2 hits in 76 CRISPR screens"/>
</dbReference>
<dbReference type="ChiTaRS" id="Trak1">
    <property type="organism name" value="mouse"/>
</dbReference>
<dbReference type="PRO" id="PR:Q6PD31"/>
<dbReference type="Proteomes" id="UP000000589">
    <property type="component" value="Chromosome 9"/>
</dbReference>
<dbReference type="RNAct" id="Q6PD31">
    <property type="molecule type" value="protein"/>
</dbReference>
<dbReference type="Bgee" id="ENSMUSG00000032536">
    <property type="expression patterns" value="Expressed in aortic valve and 269 other cell types or tissues"/>
</dbReference>
<dbReference type="ExpressionAtlas" id="Q6PD31">
    <property type="expression patterns" value="baseline and differential"/>
</dbReference>
<dbReference type="GO" id="GO:0005938">
    <property type="term" value="C:cell cortex"/>
    <property type="evidence" value="ECO:0007669"/>
    <property type="project" value="UniProtKB-SubCell"/>
</dbReference>
<dbReference type="GO" id="GO:0005737">
    <property type="term" value="C:cytoplasm"/>
    <property type="evidence" value="ECO:0000250"/>
    <property type="project" value="UniProtKB"/>
</dbReference>
<dbReference type="GO" id="GO:0005769">
    <property type="term" value="C:early endosome"/>
    <property type="evidence" value="ECO:0007669"/>
    <property type="project" value="UniProtKB-SubCell"/>
</dbReference>
<dbReference type="GO" id="GO:0031966">
    <property type="term" value="C:mitochondrial membrane"/>
    <property type="evidence" value="ECO:0007669"/>
    <property type="project" value="UniProtKB-SubCell"/>
</dbReference>
<dbReference type="GO" id="GO:0005739">
    <property type="term" value="C:mitochondrion"/>
    <property type="evidence" value="ECO:0000250"/>
    <property type="project" value="UniProtKB"/>
</dbReference>
<dbReference type="GO" id="GO:0005634">
    <property type="term" value="C:nucleus"/>
    <property type="evidence" value="ECO:0007669"/>
    <property type="project" value="UniProtKB-SubCell"/>
</dbReference>
<dbReference type="GO" id="GO:0050811">
    <property type="term" value="F:GABA receptor binding"/>
    <property type="evidence" value="ECO:0000314"/>
    <property type="project" value="MGI"/>
</dbReference>
<dbReference type="InterPro" id="IPR006933">
    <property type="entry name" value="HAP1_N"/>
</dbReference>
<dbReference type="InterPro" id="IPR051946">
    <property type="entry name" value="Intracell_Traff-Reg"/>
</dbReference>
<dbReference type="InterPro" id="IPR022154">
    <property type="entry name" value="TRAK1/2_C"/>
</dbReference>
<dbReference type="PANTHER" id="PTHR15751">
    <property type="entry name" value="TRAFFICKING KINESIN-BINDING PROTEIN"/>
    <property type="match status" value="1"/>
</dbReference>
<dbReference type="PANTHER" id="PTHR15751:SF11">
    <property type="entry name" value="TRAFFICKING KINESIN-BINDING PROTEIN 1"/>
    <property type="match status" value="1"/>
</dbReference>
<dbReference type="Pfam" id="PF04849">
    <property type="entry name" value="HAP1_N"/>
    <property type="match status" value="1"/>
</dbReference>
<dbReference type="Pfam" id="PF12448">
    <property type="entry name" value="Milton"/>
    <property type="match status" value="1"/>
</dbReference>
<dbReference type="SMART" id="SM01424">
    <property type="entry name" value="HAP1_N"/>
    <property type="match status" value="1"/>
</dbReference>
<dbReference type="SMART" id="SM01423">
    <property type="entry name" value="Milton"/>
    <property type="match status" value="1"/>
</dbReference>
<protein>
    <recommendedName>
        <fullName>Trafficking kinesin-binding protein 1</fullName>
    </recommendedName>
    <alternativeName>
        <fullName evidence="9">Protein Milton</fullName>
    </alternativeName>
</protein>
<accession>Q6PD31</accession>
<accession>Q8BYA3</accession>
<name>TRAK1_MOUSE</name>
<gene>
    <name type="primary">Trak1</name>
</gene>
<organism>
    <name type="scientific">Mus musculus</name>
    <name type="common">Mouse</name>
    <dbReference type="NCBI Taxonomy" id="10090"/>
    <lineage>
        <taxon>Eukaryota</taxon>
        <taxon>Metazoa</taxon>
        <taxon>Chordata</taxon>
        <taxon>Craniata</taxon>
        <taxon>Vertebrata</taxon>
        <taxon>Euteleostomi</taxon>
        <taxon>Mammalia</taxon>
        <taxon>Eutheria</taxon>
        <taxon>Euarchontoglires</taxon>
        <taxon>Glires</taxon>
        <taxon>Rodentia</taxon>
        <taxon>Myomorpha</taxon>
        <taxon>Muroidea</taxon>
        <taxon>Muridae</taxon>
        <taxon>Murinae</taxon>
        <taxon>Mus</taxon>
        <taxon>Mus</taxon>
    </lineage>
</organism>
<sequence length="939" mass="104467">MALAIQLRQPSRAQPLPGLSHTLAGTDSCDVCNSTNLPEVEIISLLEEQLPHYKLRADTIYGYDHDDWLHTPLISPDANIDLTTEQIEETLKYFLLCAERVGQMTKTYNDIDAVTRLLEEKERDLELAARIGQSLLKKNKTLTERNELLEEQVEHIREEVSQLRHELSMKDELLQFYTSAAEESEPESVCSTPLKRNESSSSVQNYFHLDSLQKKLKDLEEENVVLRSEACQLKTETITYEEKEQQLVNDCVKELRDANVQIASISEELAKKTEDAARQQEEITHLLSQIVDLQKKAKSCAVENEELVQHLGAAKDAQRQLTAELRELEDKYAECMEMLHEAQEELKNLRNKTMPTSRRYHSLGLFPMDSLAAEIEGTMRKELQLEELESPDITHQKRVFETVRNVNQVVKQRSLTPSPMNIPGSNQSSAMNSLLSSCVSTPRSSFYGSDVSNVVLDNKTNSILLETEAADLGNEDHNKKPGTPGTPGSHDLETALRRLSLRRENYLSERRFFEEEQERKLRELAEKGELHSGSLTPTESIMSLGTHSRFSEFTGFSGMSFSSRSYLPEKLQIVKPLEGSATLHHWQQLAQPHLGGILDPRPGVVTKGFRTLDVDLDEVYCLNDFEEDDTGDHISLAGLATSTPIQHPETSAHHPGKCMSQTNSTFTFTTCRILHPSDELTRVTPSLNSAPAPACSSTSHLKSTPVATPCTPRRLSLAESFTNVRESTTTMSTSLGLVWLLKERGISAAVYDPQSWDRAGRGSLLHSYTPRMAVIPSTPPNSPMQTPSASPPSFEFKCTSPPYNNFLASKPASSILREVREKRPVRSSESQTDVSVSNLNLVDKVRRFGVARVVNSGRARIPTLTEEQGPLLCGPTGPAQALVPGGLVPEGLPLGCPSGIRRNRSFPTMVGSSVQMRAPVILTSGILMGAKLPKQTSLR</sequence>
<reference key="1">
    <citation type="journal article" date="2005" name="Science">
        <title>The transcriptional landscape of the mammalian genome.</title>
        <authorList>
            <person name="Carninci P."/>
            <person name="Kasukawa T."/>
            <person name="Katayama S."/>
            <person name="Gough J."/>
            <person name="Frith M.C."/>
            <person name="Maeda N."/>
            <person name="Oyama R."/>
            <person name="Ravasi T."/>
            <person name="Lenhard B."/>
            <person name="Wells C."/>
            <person name="Kodzius R."/>
            <person name="Shimokawa K."/>
            <person name="Bajic V.B."/>
            <person name="Brenner S.E."/>
            <person name="Batalov S."/>
            <person name="Forrest A.R."/>
            <person name="Zavolan M."/>
            <person name="Davis M.J."/>
            <person name="Wilming L.G."/>
            <person name="Aidinis V."/>
            <person name="Allen J.E."/>
            <person name="Ambesi-Impiombato A."/>
            <person name="Apweiler R."/>
            <person name="Aturaliya R.N."/>
            <person name="Bailey T.L."/>
            <person name="Bansal M."/>
            <person name="Baxter L."/>
            <person name="Beisel K.W."/>
            <person name="Bersano T."/>
            <person name="Bono H."/>
            <person name="Chalk A.M."/>
            <person name="Chiu K.P."/>
            <person name="Choudhary V."/>
            <person name="Christoffels A."/>
            <person name="Clutterbuck D.R."/>
            <person name="Crowe M.L."/>
            <person name="Dalla E."/>
            <person name="Dalrymple B.P."/>
            <person name="de Bono B."/>
            <person name="Della Gatta G."/>
            <person name="di Bernardo D."/>
            <person name="Down T."/>
            <person name="Engstrom P."/>
            <person name="Fagiolini M."/>
            <person name="Faulkner G."/>
            <person name="Fletcher C.F."/>
            <person name="Fukushima T."/>
            <person name="Furuno M."/>
            <person name="Futaki S."/>
            <person name="Gariboldi M."/>
            <person name="Georgii-Hemming P."/>
            <person name="Gingeras T.R."/>
            <person name="Gojobori T."/>
            <person name="Green R.E."/>
            <person name="Gustincich S."/>
            <person name="Harbers M."/>
            <person name="Hayashi Y."/>
            <person name="Hensch T.K."/>
            <person name="Hirokawa N."/>
            <person name="Hill D."/>
            <person name="Huminiecki L."/>
            <person name="Iacono M."/>
            <person name="Ikeo K."/>
            <person name="Iwama A."/>
            <person name="Ishikawa T."/>
            <person name="Jakt M."/>
            <person name="Kanapin A."/>
            <person name="Katoh M."/>
            <person name="Kawasawa Y."/>
            <person name="Kelso J."/>
            <person name="Kitamura H."/>
            <person name="Kitano H."/>
            <person name="Kollias G."/>
            <person name="Krishnan S.P."/>
            <person name="Kruger A."/>
            <person name="Kummerfeld S.K."/>
            <person name="Kurochkin I.V."/>
            <person name="Lareau L.F."/>
            <person name="Lazarevic D."/>
            <person name="Lipovich L."/>
            <person name="Liu J."/>
            <person name="Liuni S."/>
            <person name="McWilliam S."/>
            <person name="Madan Babu M."/>
            <person name="Madera M."/>
            <person name="Marchionni L."/>
            <person name="Matsuda H."/>
            <person name="Matsuzawa S."/>
            <person name="Miki H."/>
            <person name="Mignone F."/>
            <person name="Miyake S."/>
            <person name="Morris K."/>
            <person name="Mottagui-Tabar S."/>
            <person name="Mulder N."/>
            <person name="Nakano N."/>
            <person name="Nakauchi H."/>
            <person name="Ng P."/>
            <person name="Nilsson R."/>
            <person name="Nishiguchi S."/>
            <person name="Nishikawa S."/>
            <person name="Nori F."/>
            <person name="Ohara O."/>
            <person name="Okazaki Y."/>
            <person name="Orlando V."/>
            <person name="Pang K.C."/>
            <person name="Pavan W.J."/>
            <person name="Pavesi G."/>
            <person name="Pesole G."/>
            <person name="Petrovsky N."/>
            <person name="Piazza S."/>
            <person name="Reed J."/>
            <person name="Reid J.F."/>
            <person name="Ring B.Z."/>
            <person name="Ringwald M."/>
            <person name="Rost B."/>
            <person name="Ruan Y."/>
            <person name="Salzberg S.L."/>
            <person name="Sandelin A."/>
            <person name="Schneider C."/>
            <person name="Schoenbach C."/>
            <person name="Sekiguchi K."/>
            <person name="Semple C.A."/>
            <person name="Seno S."/>
            <person name="Sessa L."/>
            <person name="Sheng Y."/>
            <person name="Shibata Y."/>
            <person name="Shimada H."/>
            <person name="Shimada K."/>
            <person name="Silva D."/>
            <person name="Sinclair B."/>
            <person name="Sperling S."/>
            <person name="Stupka E."/>
            <person name="Sugiura K."/>
            <person name="Sultana R."/>
            <person name="Takenaka Y."/>
            <person name="Taki K."/>
            <person name="Tammoja K."/>
            <person name="Tan S.L."/>
            <person name="Tang S."/>
            <person name="Taylor M.S."/>
            <person name="Tegner J."/>
            <person name="Teichmann S.A."/>
            <person name="Ueda H.R."/>
            <person name="van Nimwegen E."/>
            <person name="Verardo R."/>
            <person name="Wei C.L."/>
            <person name="Yagi K."/>
            <person name="Yamanishi H."/>
            <person name="Zabarovsky E."/>
            <person name="Zhu S."/>
            <person name="Zimmer A."/>
            <person name="Hide W."/>
            <person name="Bult C."/>
            <person name="Grimmond S.M."/>
            <person name="Teasdale R.D."/>
            <person name="Liu E.T."/>
            <person name="Brusic V."/>
            <person name="Quackenbush J."/>
            <person name="Wahlestedt C."/>
            <person name="Mattick J.S."/>
            <person name="Hume D.A."/>
            <person name="Kai C."/>
            <person name="Sasaki D."/>
            <person name="Tomaru Y."/>
            <person name="Fukuda S."/>
            <person name="Kanamori-Katayama M."/>
            <person name="Suzuki M."/>
            <person name="Aoki J."/>
            <person name="Arakawa T."/>
            <person name="Iida J."/>
            <person name="Imamura K."/>
            <person name="Itoh M."/>
            <person name="Kato T."/>
            <person name="Kawaji H."/>
            <person name="Kawagashira N."/>
            <person name="Kawashima T."/>
            <person name="Kojima M."/>
            <person name="Kondo S."/>
            <person name="Konno H."/>
            <person name="Nakano K."/>
            <person name="Ninomiya N."/>
            <person name="Nishio T."/>
            <person name="Okada M."/>
            <person name="Plessy C."/>
            <person name="Shibata K."/>
            <person name="Shiraki T."/>
            <person name="Suzuki S."/>
            <person name="Tagami M."/>
            <person name="Waki K."/>
            <person name="Watahiki A."/>
            <person name="Okamura-Oho Y."/>
            <person name="Suzuki H."/>
            <person name="Kawai J."/>
            <person name="Hayashizaki Y."/>
        </authorList>
    </citation>
    <scope>NUCLEOTIDE SEQUENCE [LARGE SCALE MRNA] (ISOFORM 2)</scope>
    <source>
        <strain>C57BL/6J</strain>
        <tissue>Thymus</tissue>
    </source>
</reference>
<reference key="2">
    <citation type="submission" date="2005-09" db="EMBL/GenBank/DDBJ databases">
        <authorList>
            <person name="Mural R.J."/>
            <person name="Adams M.D."/>
            <person name="Myers E.W."/>
            <person name="Smith H.O."/>
            <person name="Venter J.C."/>
        </authorList>
    </citation>
    <scope>NUCLEOTIDE SEQUENCE [LARGE SCALE GENOMIC DNA]</scope>
</reference>
<reference key="3">
    <citation type="journal article" date="2004" name="Genome Res.">
        <title>The status, quality, and expansion of the NIH full-length cDNA project: the Mammalian Gene Collection (MGC).</title>
        <authorList>
            <consortium name="The MGC Project Team"/>
        </authorList>
    </citation>
    <scope>NUCLEOTIDE SEQUENCE [LARGE SCALE MRNA] (ISOFORM 1)</scope>
    <source>
        <strain>C57BL/6J</strain>
        <tissue>Brain</tissue>
    </source>
</reference>
<reference key="4">
    <citation type="journal article" date="2006" name="Nat. Genet.">
        <title>Trak1 mutation disrupts GABA(A) receptor homeostasis in hypertonic mice.</title>
        <authorList>
            <person name="Gilbert S.L."/>
            <person name="Zhang L."/>
            <person name="Forster M.L."/>
            <person name="Anderson J.R."/>
            <person name="Iwase T."/>
            <person name="Soliven B."/>
            <person name="Donahue L.R."/>
            <person name="Sweet H.O."/>
            <person name="Bronson R.T."/>
            <person name="Davisson M.T."/>
            <person name="Wollmann R.L."/>
            <person name="Lahn B.T."/>
        </authorList>
    </citation>
    <scope>INTERACTION WITH GABRA1</scope>
    <scope>TISSUE SPECIFICITY</scope>
    <scope>DISEASE</scope>
</reference>
<reference key="5">
    <citation type="journal article" date="2010" name="Cell">
        <title>A tissue-specific atlas of mouse protein phosphorylation and expression.</title>
        <authorList>
            <person name="Huttlin E.L."/>
            <person name="Jedrychowski M.P."/>
            <person name="Elias J.E."/>
            <person name="Goswami T."/>
            <person name="Rad R."/>
            <person name="Beausoleil S.A."/>
            <person name="Villen J."/>
            <person name="Haas W."/>
            <person name="Sowa M.E."/>
            <person name="Gygi S.P."/>
        </authorList>
    </citation>
    <scope>PHOSPHORYLATION [LARGE SCALE ANALYSIS] AT SER-534; SER-716 AND SER-905</scope>
    <scope>IDENTIFICATION BY MASS SPECTROMETRY [LARGE SCALE ANALYSIS]</scope>
    <source>
        <tissue>Brain</tissue>
        <tissue>Brown adipose tissue</tissue>
        <tissue>Heart</tissue>
        <tissue>Kidney</tissue>
    </source>
</reference>
<reference key="6">
    <citation type="journal article" date="2014" name="Cell">
        <title>Glucose regulates mitochondrial motility via Milton modification by O-GlcNAc transferase.</title>
        <authorList>
            <person name="Pekkurnaz G."/>
            <person name="Trinidad J.C."/>
            <person name="Wang X."/>
            <person name="Kong D."/>
            <person name="Schwarz T.L."/>
        </authorList>
    </citation>
    <scope>FUNCTION</scope>
    <scope>SUBCELLULAR LOCATION</scope>
    <scope>GLYCOSYLATION</scope>
</reference>
<proteinExistence type="evidence at protein level"/>
<evidence type="ECO:0000250" key="1"/>
<evidence type="ECO:0000250" key="2">
    <source>
        <dbReference type="UniProtKB" id="Q960V3"/>
    </source>
</evidence>
<evidence type="ECO:0000250" key="3">
    <source>
        <dbReference type="UniProtKB" id="Q9UPV9"/>
    </source>
</evidence>
<evidence type="ECO:0000255" key="4"/>
<evidence type="ECO:0000256" key="5">
    <source>
        <dbReference type="SAM" id="MobiDB-lite"/>
    </source>
</evidence>
<evidence type="ECO:0000269" key="6">
    <source>
    </source>
</evidence>
<evidence type="ECO:0000269" key="7">
    <source>
    </source>
</evidence>
<evidence type="ECO:0000303" key="8">
    <source>
    </source>
</evidence>
<evidence type="ECO:0000303" key="9">
    <source>
    </source>
</evidence>
<evidence type="ECO:0000305" key="10"/>
<evidence type="ECO:0007744" key="11">
    <source>
    </source>
</evidence>
<comment type="function">
    <text evidence="2 3 7">Involved in the regulation of endosome-to-lysosome trafficking, including endocytic trafficking of EGF-EGFR complexes and GABA-A receptors (By similarity). Involved in mitochondrial motility (PubMed:24995978). When O-glycosylated, abolishes mitochondrial motility. Crucial for recruiting OGT to the mitochondrial surface of neuronal processes (By similarity). TRAK1 and RHOT form an essential protein complex that links KIF5 to mitochondria for light chain-independent, anterograde transport of mitochondria (By similarity).</text>
</comment>
<comment type="subunit">
    <text evidence="3 6">Interacts with RHOT1 and RHOT2. Found in a complex with KIF5B, OGT, RHOT1 and RHOT2. Interacts with HGS (By similarity). Interacts with GABRA1 (PubMed:16380713). Interacts with KIF5C. Interacts with OGT; stable interaction is not required for glycosylation of this protein by OGT. Isoform 1 interacts with OGT (By similarity).</text>
</comment>
<comment type="subcellular location">
    <subcellularLocation>
        <location evidence="7">Cytoplasm</location>
    </subcellularLocation>
    <subcellularLocation>
        <location evidence="3">Nucleus</location>
    </subcellularLocation>
    <subcellularLocation>
        <location evidence="3">Mitochondrion</location>
    </subcellularLocation>
    <subcellularLocation>
        <location evidence="3">Early endosome</location>
    </subcellularLocation>
    <subcellularLocation>
        <location evidence="3">Endosome</location>
    </subcellularLocation>
    <subcellularLocation>
        <location evidence="3">Mitochondrion membrane</location>
    </subcellularLocation>
    <subcellularLocation>
        <location evidence="7">Cytoplasm</location>
        <location evidence="7">Cell cortex</location>
    </subcellularLocation>
    <text evidence="3">Predominantly associated with early endosome. The localization to early endosomes depends on its interaction with HGS/HRS. Colocalizes with MGARP at the mitochondria.</text>
</comment>
<comment type="alternative products">
    <event type="alternative splicing"/>
    <isoform>
        <id>Q6PD31-1</id>
        <name>1</name>
        <sequence type="displayed"/>
    </isoform>
    <isoform>
        <id>Q6PD31-2</id>
        <name>2</name>
        <sequence type="described" ref="VSP_039277 VSP_039278 VSP_039279"/>
    </isoform>
</comment>
<comment type="tissue specificity">
    <text evidence="6">Widely expressed with the greatest expression in brain, liver and kidney. Detected throughout the CNS, including the cortex, hippocamps, thalamus and various subcortical nuclei of the forebrain and midbrain, the granule of Purkinje layers of the cerebellum and the gray matter of the spinal cord. High level detected in lower moter neurons (at protein level).</text>
</comment>
<comment type="PTM">
    <text evidence="3 7">O-glycosylated (PubMed:24995978). Glycosylated by OGT; glycosylation in response to increased extracellular glucose levels is required for and leads to regulation of mitochondrial motility by OGT (By similarity).</text>
</comment>
<comment type="disease">
    <text evidence="6">A spontaneous mutation (hyrt mice) causes a recessively transmitted form of hypertonia neurological dysfunction characterized by postural abnormalities, jerky movements and tremormutant. Hyrt mice have much lower levels of GABA(A) receptors in the CNS, particularly the lower motor neurons, than do wild-type mice, indicating that the hypertonicity of the mutants is likely to be caused by deficits in GABA-mediated motor neuron inhibition.</text>
</comment>
<comment type="similarity">
    <text evidence="10">Belongs to the milton family.</text>
</comment>
<keyword id="KW-0025">Alternative splicing</keyword>
<keyword id="KW-0175">Coiled coil</keyword>
<keyword id="KW-0963">Cytoplasm</keyword>
<keyword id="KW-0967">Endosome</keyword>
<keyword id="KW-0325">Glycoprotein</keyword>
<keyword id="KW-0472">Membrane</keyword>
<keyword id="KW-0496">Mitochondrion</keyword>
<keyword id="KW-0539">Nucleus</keyword>
<keyword id="KW-0597">Phosphoprotein</keyword>
<keyword id="KW-1185">Reference proteome</keyword>